<protein>
    <recommendedName>
        <fullName evidence="1">UvrABC system protein B</fullName>
        <shortName evidence="1">Protein UvrB</shortName>
    </recommendedName>
    <alternativeName>
        <fullName evidence="1">Excinuclease ABC subunit B</fullName>
    </alternativeName>
</protein>
<keyword id="KW-0067">ATP-binding</keyword>
<keyword id="KW-0963">Cytoplasm</keyword>
<keyword id="KW-0227">DNA damage</keyword>
<keyword id="KW-0228">DNA excision</keyword>
<keyword id="KW-0234">DNA repair</keyword>
<keyword id="KW-0267">Excision nuclease</keyword>
<keyword id="KW-0547">Nucleotide-binding</keyword>
<keyword id="KW-1185">Reference proteome</keyword>
<keyword id="KW-0742">SOS response</keyword>
<feature type="chain" id="PRO_0000227372" description="UvrABC system protein B">
    <location>
        <begin position="1"/>
        <end position="712"/>
    </location>
</feature>
<feature type="domain" description="Helicase ATP-binding" evidence="1">
    <location>
        <begin position="35"/>
        <end position="421"/>
    </location>
</feature>
<feature type="domain" description="Helicase C-terminal" evidence="1">
    <location>
        <begin position="438"/>
        <end position="604"/>
    </location>
</feature>
<feature type="domain" description="UVR" evidence="1">
    <location>
        <begin position="667"/>
        <end position="702"/>
    </location>
</feature>
<feature type="region of interest" description="Disordered" evidence="2">
    <location>
        <begin position="625"/>
        <end position="655"/>
    </location>
</feature>
<feature type="short sequence motif" description="Beta-hairpin">
    <location>
        <begin position="101"/>
        <end position="124"/>
    </location>
</feature>
<feature type="binding site" evidence="1">
    <location>
        <begin position="48"/>
        <end position="55"/>
    </location>
    <ligand>
        <name>ATP</name>
        <dbReference type="ChEBI" id="CHEBI:30616"/>
    </ligand>
</feature>
<proteinExistence type="inferred from homology"/>
<organism>
    <name type="scientific">Streptomyces coelicolor (strain ATCC BAA-471 / A3(2) / M145)</name>
    <dbReference type="NCBI Taxonomy" id="100226"/>
    <lineage>
        <taxon>Bacteria</taxon>
        <taxon>Bacillati</taxon>
        <taxon>Actinomycetota</taxon>
        <taxon>Actinomycetes</taxon>
        <taxon>Kitasatosporales</taxon>
        <taxon>Streptomycetaceae</taxon>
        <taxon>Streptomyces</taxon>
        <taxon>Streptomyces albidoflavus group</taxon>
    </lineage>
</organism>
<accession>Q8CK11</accession>
<name>UVRB_STRCO</name>
<dbReference type="EMBL" id="AL939111">
    <property type="protein sequence ID" value="CAD55287.1"/>
    <property type="molecule type" value="Genomic_DNA"/>
</dbReference>
<dbReference type="PIR" id="T36039">
    <property type="entry name" value="T36039"/>
</dbReference>
<dbReference type="RefSeq" id="NP_733553.1">
    <property type="nucleotide sequence ID" value="NC_003888.3"/>
</dbReference>
<dbReference type="RefSeq" id="WP_011028069.1">
    <property type="nucleotide sequence ID" value="NZ_VNID01000001.1"/>
</dbReference>
<dbReference type="SMR" id="Q8CK11"/>
<dbReference type="FunCoup" id="Q8CK11">
    <property type="interactions" value="8"/>
</dbReference>
<dbReference type="STRING" id="100226.gene:17759563"/>
<dbReference type="PaxDb" id="100226-SCO1966"/>
<dbReference type="KEGG" id="sco:SCO1966"/>
<dbReference type="PATRIC" id="fig|100226.15.peg.1992"/>
<dbReference type="eggNOG" id="COG0556">
    <property type="taxonomic scope" value="Bacteria"/>
</dbReference>
<dbReference type="HOGENOM" id="CLU_009621_2_1_11"/>
<dbReference type="InParanoid" id="Q8CK11"/>
<dbReference type="OrthoDB" id="9806651at2"/>
<dbReference type="PhylomeDB" id="Q8CK11"/>
<dbReference type="Proteomes" id="UP000001973">
    <property type="component" value="Chromosome"/>
</dbReference>
<dbReference type="GO" id="GO:0005737">
    <property type="term" value="C:cytoplasm"/>
    <property type="evidence" value="ECO:0007669"/>
    <property type="project" value="UniProtKB-SubCell"/>
</dbReference>
<dbReference type="GO" id="GO:0009380">
    <property type="term" value="C:excinuclease repair complex"/>
    <property type="evidence" value="ECO:0000318"/>
    <property type="project" value="GO_Central"/>
</dbReference>
<dbReference type="GO" id="GO:0005524">
    <property type="term" value="F:ATP binding"/>
    <property type="evidence" value="ECO:0007669"/>
    <property type="project" value="UniProtKB-UniRule"/>
</dbReference>
<dbReference type="GO" id="GO:0016887">
    <property type="term" value="F:ATP hydrolysis activity"/>
    <property type="evidence" value="ECO:0007669"/>
    <property type="project" value="InterPro"/>
</dbReference>
<dbReference type="GO" id="GO:0003677">
    <property type="term" value="F:DNA binding"/>
    <property type="evidence" value="ECO:0007669"/>
    <property type="project" value="UniProtKB-UniRule"/>
</dbReference>
<dbReference type="GO" id="GO:0009381">
    <property type="term" value="F:excinuclease ABC activity"/>
    <property type="evidence" value="ECO:0007669"/>
    <property type="project" value="UniProtKB-UniRule"/>
</dbReference>
<dbReference type="GO" id="GO:0000715">
    <property type="term" value="P:nucleotide-excision repair, DNA damage recognition"/>
    <property type="evidence" value="ECO:0000318"/>
    <property type="project" value="GO_Central"/>
</dbReference>
<dbReference type="GO" id="GO:0009432">
    <property type="term" value="P:SOS response"/>
    <property type="evidence" value="ECO:0007669"/>
    <property type="project" value="UniProtKB-UniRule"/>
</dbReference>
<dbReference type="CDD" id="cd17916">
    <property type="entry name" value="DEXHc_UvrB"/>
    <property type="match status" value="1"/>
</dbReference>
<dbReference type="CDD" id="cd18790">
    <property type="entry name" value="SF2_C_UvrB"/>
    <property type="match status" value="1"/>
</dbReference>
<dbReference type="Gene3D" id="3.40.50.300">
    <property type="entry name" value="P-loop containing nucleotide triphosphate hydrolases"/>
    <property type="match status" value="3"/>
</dbReference>
<dbReference type="Gene3D" id="4.10.860.10">
    <property type="entry name" value="UVR domain"/>
    <property type="match status" value="1"/>
</dbReference>
<dbReference type="HAMAP" id="MF_00204">
    <property type="entry name" value="UvrB"/>
    <property type="match status" value="1"/>
</dbReference>
<dbReference type="InterPro" id="IPR006935">
    <property type="entry name" value="Helicase/UvrB_N"/>
</dbReference>
<dbReference type="InterPro" id="IPR014001">
    <property type="entry name" value="Helicase_ATP-bd"/>
</dbReference>
<dbReference type="InterPro" id="IPR001650">
    <property type="entry name" value="Helicase_C-like"/>
</dbReference>
<dbReference type="InterPro" id="IPR027417">
    <property type="entry name" value="P-loop_NTPase"/>
</dbReference>
<dbReference type="InterPro" id="IPR001943">
    <property type="entry name" value="UVR_dom"/>
</dbReference>
<dbReference type="InterPro" id="IPR036876">
    <property type="entry name" value="UVR_dom_sf"/>
</dbReference>
<dbReference type="InterPro" id="IPR004807">
    <property type="entry name" value="UvrB"/>
</dbReference>
<dbReference type="InterPro" id="IPR041471">
    <property type="entry name" value="UvrB_inter"/>
</dbReference>
<dbReference type="InterPro" id="IPR024759">
    <property type="entry name" value="UvrB_YAD/RRR_dom"/>
</dbReference>
<dbReference type="NCBIfam" id="NF003673">
    <property type="entry name" value="PRK05298.1"/>
    <property type="match status" value="1"/>
</dbReference>
<dbReference type="NCBIfam" id="TIGR00631">
    <property type="entry name" value="uvrb"/>
    <property type="match status" value="1"/>
</dbReference>
<dbReference type="PANTHER" id="PTHR24029">
    <property type="entry name" value="UVRABC SYSTEM PROTEIN B"/>
    <property type="match status" value="1"/>
</dbReference>
<dbReference type="PANTHER" id="PTHR24029:SF0">
    <property type="entry name" value="UVRABC SYSTEM PROTEIN B"/>
    <property type="match status" value="1"/>
</dbReference>
<dbReference type="Pfam" id="PF00271">
    <property type="entry name" value="Helicase_C"/>
    <property type="match status" value="1"/>
</dbReference>
<dbReference type="Pfam" id="PF04851">
    <property type="entry name" value="ResIII"/>
    <property type="match status" value="1"/>
</dbReference>
<dbReference type="Pfam" id="PF02151">
    <property type="entry name" value="UVR"/>
    <property type="match status" value="1"/>
</dbReference>
<dbReference type="Pfam" id="PF12344">
    <property type="entry name" value="UvrB"/>
    <property type="match status" value="1"/>
</dbReference>
<dbReference type="Pfam" id="PF17757">
    <property type="entry name" value="UvrB_inter"/>
    <property type="match status" value="1"/>
</dbReference>
<dbReference type="SMART" id="SM00487">
    <property type="entry name" value="DEXDc"/>
    <property type="match status" value="1"/>
</dbReference>
<dbReference type="SMART" id="SM00490">
    <property type="entry name" value="HELICc"/>
    <property type="match status" value="1"/>
</dbReference>
<dbReference type="SUPFAM" id="SSF46600">
    <property type="entry name" value="C-terminal UvrC-binding domain of UvrB"/>
    <property type="match status" value="1"/>
</dbReference>
<dbReference type="SUPFAM" id="SSF52540">
    <property type="entry name" value="P-loop containing nucleoside triphosphate hydrolases"/>
    <property type="match status" value="2"/>
</dbReference>
<dbReference type="PROSITE" id="PS51192">
    <property type="entry name" value="HELICASE_ATP_BIND_1"/>
    <property type="match status" value="1"/>
</dbReference>
<dbReference type="PROSITE" id="PS51194">
    <property type="entry name" value="HELICASE_CTER"/>
    <property type="match status" value="1"/>
</dbReference>
<dbReference type="PROSITE" id="PS50151">
    <property type="entry name" value="UVR"/>
    <property type="match status" value="1"/>
</dbReference>
<sequence length="712" mass="80028">MRPVSQIERTVAPFEVVSPYQPSGDQPTAIAELARRVQAGEKDVVLLGATGTGKSATTAWMIEKLQRPTLVMAPNKTLAAQLANEFRELLPNNAVEYFVSYYDYYQPEAYVPQSDTYIEKDSSINEEVERLRHSATNSLLTRRDVIVVASVSCIYGLGTPQEYVDRMVPLRVGEEHDRDELLRRFVDIQYTRNDMAFARGTFRVRGDTIEIFPVYEELAVRIEMFGDEIEALSTLHPVTGEIISEDQQLYVFPASHYVAGPERLERAVNDIEKELAERLTELEKQGKLLEAQRLRMRTTYDIEMLRQIGSCSGVENYSMHFDGRSPGSPPNTLLDYFPDDFLLVIDESHVTVPQIGAMYEGDASRKRTLVDHGFRLPSALDNRPLKWEEFQERIGQTVYLSATPGAYELSRSDGAVEQIIRPTGLVDPEVVVKPTEGQIDDLVHEIRRRTEKDERVLVTTLTKKMAEDLTDYFVELGIQVRYLHSDVDTLRRVELLRELRAGEYDVLVGINLLREGLDLPEVSLVAILDADKEGFLRSGTSLIQTIGRAARNVSGQVHMYADKITPAMEKAIDETNRRREKQVAFNKANGVDPQPLRKKINDIVAQIAREDVDTEQLLGSGYRQTKEGKGAKAPVPALGGQKTGGAKAARGRAKETAVTDRPAAELAEQIEDLTTRMRAAAADLQFEIAARLRDEVSEMKKELRQMREAGLA</sequence>
<gene>
    <name evidence="1" type="primary">uvrB</name>
    <name type="ordered locus">SCO1966</name>
    <name type="ORF">SC3C9.01c</name>
    <name type="ORF">SCC54.26c</name>
</gene>
<comment type="function">
    <text evidence="1">The UvrABC repair system catalyzes the recognition and processing of DNA lesions. A damage recognition complex composed of 2 UvrA and 2 UvrB subunits scans DNA for abnormalities. Upon binding of the UvrA(2)B(2) complex to a putative damaged site, the DNA wraps around one UvrB monomer. DNA wrap is dependent on ATP binding by UvrB and probably causes local melting of the DNA helix, facilitating insertion of UvrB beta-hairpin between the DNA strands. Then UvrB probes one DNA strand for the presence of a lesion. If a lesion is found the UvrA subunits dissociate and the UvrB-DNA preincision complex is formed. This complex is subsequently bound by UvrC and the second UvrB is released. If no lesion is found, the DNA wraps around the other UvrB subunit that will check the other stand for damage.</text>
</comment>
<comment type="subunit">
    <text evidence="1">Forms a heterotetramer with UvrA during the search for lesions. Interacts with UvrC in an incision complex.</text>
</comment>
<comment type="subcellular location">
    <subcellularLocation>
        <location evidence="1">Cytoplasm</location>
    </subcellularLocation>
</comment>
<comment type="domain">
    <text evidence="1">The beta-hairpin motif is involved in DNA binding.</text>
</comment>
<comment type="similarity">
    <text evidence="1">Belongs to the UvrB family.</text>
</comment>
<evidence type="ECO:0000255" key="1">
    <source>
        <dbReference type="HAMAP-Rule" id="MF_00204"/>
    </source>
</evidence>
<evidence type="ECO:0000256" key="2">
    <source>
        <dbReference type="SAM" id="MobiDB-lite"/>
    </source>
</evidence>
<reference key="1">
    <citation type="journal article" date="2002" name="Nature">
        <title>Complete genome sequence of the model actinomycete Streptomyces coelicolor A3(2).</title>
        <authorList>
            <person name="Bentley S.D."/>
            <person name="Chater K.F."/>
            <person name="Cerdeno-Tarraga A.-M."/>
            <person name="Challis G.L."/>
            <person name="Thomson N.R."/>
            <person name="James K.D."/>
            <person name="Harris D.E."/>
            <person name="Quail M.A."/>
            <person name="Kieser H."/>
            <person name="Harper D."/>
            <person name="Bateman A."/>
            <person name="Brown S."/>
            <person name="Chandra G."/>
            <person name="Chen C.W."/>
            <person name="Collins M."/>
            <person name="Cronin A."/>
            <person name="Fraser A."/>
            <person name="Goble A."/>
            <person name="Hidalgo J."/>
            <person name="Hornsby T."/>
            <person name="Howarth S."/>
            <person name="Huang C.-H."/>
            <person name="Kieser T."/>
            <person name="Larke L."/>
            <person name="Murphy L.D."/>
            <person name="Oliver K."/>
            <person name="O'Neil S."/>
            <person name="Rabbinowitsch E."/>
            <person name="Rajandream M.A."/>
            <person name="Rutherford K.M."/>
            <person name="Rutter S."/>
            <person name="Seeger K."/>
            <person name="Saunders D."/>
            <person name="Sharp S."/>
            <person name="Squares R."/>
            <person name="Squares S."/>
            <person name="Taylor K."/>
            <person name="Warren T."/>
            <person name="Wietzorrek A."/>
            <person name="Woodward J.R."/>
            <person name="Barrell B.G."/>
            <person name="Parkhill J."/>
            <person name="Hopwood D.A."/>
        </authorList>
    </citation>
    <scope>NUCLEOTIDE SEQUENCE [LARGE SCALE GENOMIC DNA]</scope>
    <source>
        <strain>ATCC BAA-471 / A3(2) / M145</strain>
    </source>
</reference>